<gene>
    <name evidence="8" type="primary">bphA1</name>
    <name evidence="10" type="synonym">bphAa</name>
    <name evidence="10" type="ordered locus">RHA1_ro08060</name>
</gene>
<comment type="function">
    <text evidence="4 5">Part of the oxygenase component of the biphenyl dioxygenase system that catalyzes the stereospecific dihydroxylation of the aromatic ring of biphenyl, yielding a dihydrodiol compound. Is essential for biphenyl degradation and growth of Rhodococcus sp. strain RHA1 on biphenyl as the sole source of carbon and energy. Can also use naphtalene and 4-chlorobiphenyl (4-CB) as substrates, as well as some polychlorinated biphenyls (PCB) such as 2,2'-dichlorobiphenyl, 2,3-dichlorobiphenyl and 2,5,2'-trichlorobiphenyl. Exhibits weak activity toward dibenzofuran and dibenzo-p-dioxin. Electrons are transferred from NADH to the [2Fe-2S] cluster in BphA1 via FAD of BphA4 and [2Fe-2S] cluster of BphA3.</text>
</comment>
<comment type="catalytic activity">
    <reaction evidence="4">
        <text>biphenyl + NADH + O2 + H(+) = (2R,3S)-3-phenylcyclohexa-3,5-diene-1,2-diol + NAD(+)</text>
        <dbReference type="Rhea" id="RHEA:18165"/>
        <dbReference type="ChEBI" id="CHEBI:15378"/>
        <dbReference type="ChEBI" id="CHEBI:15379"/>
        <dbReference type="ChEBI" id="CHEBI:17097"/>
        <dbReference type="ChEBI" id="CHEBI:32922"/>
        <dbReference type="ChEBI" id="CHEBI:57540"/>
        <dbReference type="ChEBI" id="CHEBI:57945"/>
        <dbReference type="EC" id="1.14.12.18"/>
    </reaction>
</comment>
<comment type="cofactor">
    <cofactor evidence="3">
        <name>[2Fe-2S] cluster</name>
        <dbReference type="ChEBI" id="CHEBI:190135"/>
    </cofactor>
    <text evidence="3">Binds 1 [2Fe-2S] cluster per subunit.</text>
</comment>
<comment type="cofactor">
    <cofactor evidence="3">
        <name>Fe cation</name>
        <dbReference type="ChEBI" id="CHEBI:24875"/>
    </cofactor>
    <text evidence="3">Binds 1 Fe cation per subunit.</text>
</comment>
<comment type="pathway">
    <text evidence="5">Xenobiotic degradation; biphenyl degradation; 2-hydroxy-2,4-pentadienoate and benzoate from biphenyl: step 1/4.</text>
</comment>
<comment type="subunit">
    <text evidence="3 7">Heterohexamer consisting of three BphA1 subunits and three BphA2 subunits. The multicomponent biphenyl dioxygenase system is composed of a ferredoxin reductase (BphA4), a ferredoxin (BphA3), and a terminal oxygenase (BphA1A2).</text>
</comment>
<comment type="interaction">
    <interactant intactId="EBI-1040100">
        <id>Q53122</id>
    </interactant>
    <interactant intactId="EBI-1040088">
        <id>Q53123</id>
        <label>bphA2</label>
    </interactant>
    <organismsDiffer>false</organismsDiffer>
    <experiments>2</experiments>
</comment>
<comment type="induction">
    <text evidence="2">Transcription is up-regulated by aromatic compounds including biphenyl, ethylbenzene, benzene, toluene, xylene, cumene, cymene, and chlorinated benzenes. Is under the control of the BphST two-component regulatory system.</text>
</comment>
<comment type="disruption phenotype">
    <text evidence="5">Cells lacking this gene lose their ability to grow on biphenyl.</text>
</comment>
<comment type="similarity">
    <text evidence="9">Belongs to the bacterial ring-hydroxylating dioxygenase alpha subunit family.</text>
</comment>
<reference key="1">
    <citation type="journal article" date="1995" name="Appl. Environ. Microbiol.">
        <title>Characterization of biphenyl catabolic genes of gram-positive polychlorinated biphenyl degrader Rhodococcus sp. strain RHA1.</title>
        <authorList>
            <person name="Masai E."/>
            <person name="Yamada A."/>
            <person name="Healy J.M."/>
            <person name="Hatta T."/>
            <person name="Kimbara K."/>
            <person name="Fukuda M."/>
            <person name="Yano K."/>
        </authorList>
    </citation>
    <scope>NUCLEOTIDE SEQUENCE [GENOMIC DNA]</scope>
    <scope>FUNCTION</scope>
    <scope>DISRUPTION PHENOTYPE</scope>
    <scope>PATHWAY</scope>
    <source>
        <strain>RHA1</strain>
    </source>
</reference>
<reference key="2">
    <citation type="journal article" date="2006" name="Proc. Natl. Acad. Sci. U.S.A.">
        <title>The complete genome of Rhodococcus sp. RHA1 provides insights into a catabolic powerhouse.</title>
        <authorList>
            <person name="McLeod M.P."/>
            <person name="Warren R.L."/>
            <person name="Hsiao W.W.L."/>
            <person name="Araki N."/>
            <person name="Myhre M."/>
            <person name="Fernandes C."/>
            <person name="Miyazawa D."/>
            <person name="Wong W."/>
            <person name="Lillquist A.L."/>
            <person name="Wang D."/>
            <person name="Dosanjh M."/>
            <person name="Hara H."/>
            <person name="Petrescu A."/>
            <person name="Morin R.D."/>
            <person name="Yang G."/>
            <person name="Stott J.M."/>
            <person name="Schein J.E."/>
            <person name="Shin H."/>
            <person name="Smailus D."/>
            <person name="Siddiqui A.S."/>
            <person name="Marra M.A."/>
            <person name="Jones S.J.M."/>
            <person name="Holt R."/>
            <person name="Brinkman F.S.L."/>
            <person name="Miyauchi K."/>
            <person name="Fukuda M."/>
            <person name="Davies J.E."/>
            <person name="Mohn W.W."/>
            <person name="Eltis L.D."/>
        </authorList>
    </citation>
    <scope>NUCLEOTIDE SEQUENCE [LARGE SCALE GENOMIC DNA]</scope>
    <source>
        <strain>RHA1</strain>
    </source>
</reference>
<reference key="3">
    <citation type="journal article" date="2004" name="J. Bacteriol.">
        <title>Characterization of transcriptional regulatory genes for biphenyl degradation in Rhodococcus sp. strain RHA1.</title>
        <authorList>
            <person name="Takeda H."/>
            <person name="Yamada A."/>
            <person name="Miyauchi K."/>
            <person name="Masai E."/>
            <person name="Fukuda M."/>
        </authorList>
    </citation>
    <scope>INDUCTION</scope>
    <source>
        <strain>RHA1</strain>
    </source>
</reference>
<reference key="4">
    <citation type="journal article" date="2007" name="Biosci. Biotechnol. Biochem.">
        <title>Characterization of two biphenyl dioxygenases for biphenyl/PCB degradation in A PCB degrader, Rhodococcus sp. strain RHA1.</title>
        <authorList>
            <person name="Iwasaki T."/>
            <person name="Takeda H."/>
            <person name="Miyauchi K."/>
            <person name="Yamada T."/>
            <person name="Masai E."/>
            <person name="Fukuda M."/>
        </authorList>
    </citation>
    <scope>FUNCTION</scope>
    <scope>CATALYTIC ACTIVITY</scope>
    <scope>SUBSTRATE SPECIFICITY</scope>
    <source>
        <strain>RHA1</strain>
    </source>
</reference>
<reference key="5">
    <citation type="journal article" date="2004" name="J. Mol. Biol.">
        <title>Crystal structure of the terminal oxygenase component of biphenyl dioxygenase derived from Rhodococcus sp. strain RHA1.</title>
        <authorList>
            <person name="Furusawa Y."/>
            <person name="Nagarajan V."/>
            <person name="Tanokura M."/>
            <person name="Masai E."/>
            <person name="Fukuda M."/>
            <person name="Senda T."/>
        </authorList>
    </citation>
    <scope>X-RAY CRYSTALLOGRAPHY (2.20 ANGSTROMS) IN COMPLEXES WITH BETA SUBUNIT; BIPHENYL; IRON AND IRON-SULFUR (2FE-2S)</scope>
    <scope>COFACTOR</scope>
    <source>
        <strain>RHA1</strain>
    </source>
</reference>
<name>BPHA1_RHOJR</name>
<sequence length="460" mass="51592">MTDVQCEPALAGRKPKWADADIAELVDERTGRLDPRIYTDEALYEQELERIFGRSWLLMGHETQIPKAGDFMTNYMGEDPVMVVRQKNGEIRVFLNQCRHRGMRICRADGGNAKSFTCSYHGWAYDTGGNLVSVPFEEQAFPGLRKEDWGPLQARVETYKGLIFANWDADAPDLDTYLGEAKFYMDHMLDRTEAGTEAIPGIQKWVIPCNWKFAAEQFCSDMYHAGTTSHLSGILAGLPDGVDLSELAPPTEGIQYRATWGGHGSGFYIGDPNLLLAIMGPKVTEYWTQGPAAEKASERLGSTERGQQLMAQHMTIFPTCSFLPGINTIRAWHPRGPNEIEVWAFTVVDADAPEEMKEEYRQQTLRTFSAGGVFEQDDGENWVEIQQVLRGHKARSRPFNAEMGLGQTDSDNPDYPGTISYVYSEEAARGLYTQWVRMMTSPDWAALDATRPAVSESTHT</sequence>
<dbReference type="EC" id="1.14.12.18" evidence="4"/>
<dbReference type="EMBL" id="CP000432">
    <property type="protein sequence ID" value="ABG99107.1"/>
    <property type="molecule type" value="Genomic_DNA"/>
</dbReference>
<dbReference type="EMBL" id="D32142">
    <property type="protein sequence ID" value="BAA06868.1"/>
    <property type="molecule type" value="Genomic_DNA"/>
</dbReference>
<dbReference type="RefSeq" id="WP_011599002.1">
    <property type="nucleotide sequence ID" value="NC_008269.1"/>
</dbReference>
<dbReference type="PDB" id="1ULI">
    <property type="method" value="X-ray"/>
    <property type="resolution" value="2.20 A"/>
    <property type="chains" value="A/C/E=1-460"/>
</dbReference>
<dbReference type="PDB" id="1ULJ">
    <property type="method" value="X-ray"/>
    <property type="resolution" value="2.60 A"/>
    <property type="chains" value="A/C/E=1-460"/>
</dbReference>
<dbReference type="PDBsum" id="1ULI"/>
<dbReference type="PDBsum" id="1ULJ"/>
<dbReference type="SMR" id="Q53122"/>
<dbReference type="IntAct" id="Q53122">
    <property type="interactions" value="1"/>
</dbReference>
<dbReference type="KEGG" id="rha:RHA1_ro08060"/>
<dbReference type="PATRIC" id="fig|101510.16.peg.7407"/>
<dbReference type="HOGENOM" id="CLU_026244_4_0_11"/>
<dbReference type="OrthoDB" id="5243643at2"/>
<dbReference type="UniPathway" id="UPA00155">
    <property type="reaction ID" value="UER00250"/>
</dbReference>
<dbReference type="EvolutionaryTrace" id="Q53122"/>
<dbReference type="Proteomes" id="UP000008710">
    <property type="component" value="Plasmid pRHL1"/>
</dbReference>
<dbReference type="GO" id="GO:0051537">
    <property type="term" value="F:2 iron, 2 sulfur cluster binding"/>
    <property type="evidence" value="ECO:0007669"/>
    <property type="project" value="UniProtKB-KW"/>
</dbReference>
<dbReference type="GO" id="GO:0018687">
    <property type="term" value="F:biphenyl 2,3-dioxygenase activity"/>
    <property type="evidence" value="ECO:0007669"/>
    <property type="project" value="UniProtKB-EC"/>
</dbReference>
<dbReference type="GO" id="GO:0005506">
    <property type="term" value="F:iron ion binding"/>
    <property type="evidence" value="ECO:0007669"/>
    <property type="project" value="InterPro"/>
</dbReference>
<dbReference type="GO" id="GO:0004497">
    <property type="term" value="F:monooxygenase activity"/>
    <property type="evidence" value="ECO:0007669"/>
    <property type="project" value="UniProtKB-ARBA"/>
</dbReference>
<dbReference type="GO" id="GO:0009056">
    <property type="term" value="P:catabolic process"/>
    <property type="evidence" value="ECO:0007669"/>
    <property type="project" value="UniProtKB-KW"/>
</dbReference>
<dbReference type="CDD" id="cd08881">
    <property type="entry name" value="RHO_alpha_C_NDO-like"/>
    <property type="match status" value="1"/>
</dbReference>
<dbReference type="CDD" id="cd03472">
    <property type="entry name" value="Rieske_RO_Alpha_BPDO_like"/>
    <property type="match status" value="1"/>
</dbReference>
<dbReference type="Gene3D" id="3.90.380.10">
    <property type="entry name" value="Naphthalene 1,2-dioxygenase Alpha Subunit, Chain A, domain 1"/>
    <property type="match status" value="1"/>
</dbReference>
<dbReference type="Gene3D" id="2.102.10.10">
    <property type="entry name" value="Rieske [2Fe-2S] iron-sulphur domain"/>
    <property type="match status" value="1"/>
</dbReference>
<dbReference type="InterPro" id="IPR043266">
    <property type="entry name" value="RHO_NdoB-like_C"/>
</dbReference>
<dbReference type="InterPro" id="IPR017941">
    <property type="entry name" value="Rieske_2Fe-2S"/>
</dbReference>
<dbReference type="InterPro" id="IPR036922">
    <property type="entry name" value="Rieske_2Fe-2S_sf"/>
</dbReference>
<dbReference type="InterPro" id="IPR015881">
    <property type="entry name" value="Ring-hydroxy_dOase_2Fe2S_BS"/>
</dbReference>
<dbReference type="InterPro" id="IPR015879">
    <property type="entry name" value="Ring_hydroxy_dOase_asu_C_dom"/>
</dbReference>
<dbReference type="InterPro" id="IPR001663">
    <property type="entry name" value="Rng_hydr_dOase-A"/>
</dbReference>
<dbReference type="PANTHER" id="PTHR43756:SF1">
    <property type="entry name" value="3-PHENYLPROPIONATE_CINNAMIC ACID DIOXYGENASE SUBUNIT ALPHA"/>
    <property type="match status" value="1"/>
</dbReference>
<dbReference type="PANTHER" id="PTHR43756">
    <property type="entry name" value="CHOLINE MONOOXYGENASE, CHLOROPLASTIC"/>
    <property type="match status" value="1"/>
</dbReference>
<dbReference type="Pfam" id="PF00355">
    <property type="entry name" value="Rieske"/>
    <property type="match status" value="1"/>
</dbReference>
<dbReference type="Pfam" id="PF00848">
    <property type="entry name" value="Ring_hydroxyl_A"/>
    <property type="match status" value="1"/>
</dbReference>
<dbReference type="PRINTS" id="PR00090">
    <property type="entry name" value="RNGDIOXGNASE"/>
</dbReference>
<dbReference type="SUPFAM" id="SSF55961">
    <property type="entry name" value="Bet v1-like"/>
    <property type="match status" value="1"/>
</dbReference>
<dbReference type="SUPFAM" id="SSF50022">
    <property type="entry name" value="ISP domain"/>
    <property type="match status" value="1"/>
</dbReference>
<dbReference type="PROSITE" id="PS51296">
    <property type="entry name" value="RIESKE"/>
    <property type="match status" value="1"/>
</dbReference>
<dbReference type="PROSITE" id="PS00570">
    <property type="entry name" value="RING_HYDROXYL_ALPHA"/>
    <property type="match status" value="1"/>
</dbReference>
<feature type="chain" id="PRO_0000430659" description="Biphenyl 2,3-dioxygenase subunit alpha">
    <location>
        <begin position="1"/>
        <end position="460"/>
    </location>
</feature>
<feature type="domain" description="Rieske" evidence="1">
    <location>
        <begin position="56"/>
        <end position="165"/>
    </location>
</feature>
<feature type="binding site" evidence="3 11 12">
    <location>
        <position position="98"/>
    </location>
    <ligand>
        <name>[2Fe-2S] cluster</name>
        <dbReference type="ChEBI" id="CHEBI:190135"/>
    </ligand>
</feature>
<feature type="binding site" evidence="3 11 12">
    <location>
        <position position="100"/>
    </location>
    <ligand>
        <name>[2Fe-2S] cluster</name>
        <dbReference type="ChEBI" id="CHEBI:190135"/>
    </ligand>
</feature>
<feature type="binding site" evidence="3 11 12">
    <location>
        <position position="118"/>
    </location>
    <ligand>
        <name>[2Fe-2S] cluster</name>
        <dbReference type="ChEBI" id="CHEBI:190135"/>
    </ligand>
</feature>
<feature type="binding site" evidence="3 11 12">
    <location>
        <position position="121"/>
    </location>
    <ligand>
        <name>[2Fe-2S] cluster</name>
        <dbReference type="ChEBI" id="CHEBI:190135"/>
    </ligand>
</feature>
<feature type="binding site" evidence="3">
    <location>
        <begin position="217"/>
        <end position="230"/>
    </location>
    <ligand>
        <name>substrate</name>
    </ligand>
</feature>
<feature type="binding site" evidence="3 11 12">
    <location>
        <position position="224"/>
    </location>
    <ligand>
        <name>Fe cation</name>
        <dbReference type="ChEBI" id="CHEBI:24875"/>
    </ligand>
</feature>
<feature type="binding site" evidence="3 11 12">
    <location>
        <position position="230"/>
    </location>
    <ligand>
        <name>Fe cation</name>
        <dbReference type="ChEBI" id="CHEBI:24875"/>
    </ligand>
</feature>
<feature type="binding site" evidence="3 11 12">
    <location>
        <position position="378"/>
    </location>
    <ligand>
        <name>Fe cation</name>
        <dbReference type="ChEBI" id="CHEBI:24875"/>
    </ligand>
</feature>
<feature type="helix" evidence="13">
    <location>
        <begin position="19"/>
        <end position="23"/>
    </location>
</feature>
<feature type="turn" evidence="13">
    <location>
        <begin position="28"/>
        <end position="31"/>
    </location>
</feature>
<feature type="helix" evidence="13">
    <location>
        <begin position="35"/>
        <end position="38"/>
    </location>
</feature>
<feature type="helix" evidence="13">
    <location>
        <begin position="41"/>
        <end position="50"/>
    </location>
</feature>
<feature type="turn" evidence="13">
    <location>
        <begin position="51"/>
        <end position="54"/>
    </location>
</feature>
<feature type="strand" evidence="13">
    <location>
        <begin position="57"/>
        <end position="61"/>
    </location>
</feature>
<feature type="helix" evidence="13">
    <location>
        <begin position="62"/>
        <end position="64"/>
    </location>
</feature>
<feature type="strand" evidence="13">
    <location>
        <begin position="70"/>
        <end position="76"/>
    </location>
</feature>
<feature type="strand" evidence="13">
    <location>
        <begin position="79"/>
        <end position="85"/>
    </location>
</feature>
<feature type="strand" evidence="13">
    <location>
        <begin position="91"/>
        <end position="96"/>
    </location>
</feature>
<feature type="turn" evidence="13">
    <location>
        <begin position="99"/>
        <end position="101"/>
    </location>
</feature>
<feature type="strand" evidence="13">
    <location>
        <begin position="108"/>
        <end position="112"/>
    </location>
</feature>
<feature type="turn" evidence="13">
    <location>
        <begin position="119"/>
        <end position="121"/>
    </location>
</feature>
<feature type="strand" evidence="13">
    <location>
        <begin position="131"/>
        <end position="133"/>
    </location>
</feature>
<feature type="helix" evidence="13">
    <location>
        <begin position="137"/>
        <end position="140"/>
    </location>
</feature>
<feature type="helix" evidence="13">
    <location>
        <begin position="146"/>
        <end position="148"/>
    </location>
</feature>
<feature type="strand" evidence="13">
    <location>
        <begin position="153"/>
        <end position="159"/>
    </location>
</feature>
<feature type="strand" evidence="13">
    <location>
        <begin position="162"/>
        <end position="166"/>
    </location>
</feature>
<feature type="helix" evidence="13">
    <location>
        <begin position="174"/>
        <end position="178"/>
    </location>
</feature>
<feature type="helix" evidence="13">
    <location>
        <begin position="181"/>
        <end position="189"/>
    </location>
</feature>
<feature type="strand" evidence="13">
    <location>
        <begin position="196"/>
        <end position="198"/>
    </location>
</feature>
<feature type="strand" evidence="13">
    <location>
        <begin position="203"/>
        <end position="207"/>
    </location>
</feature>
<feature type="helix" evidence="13">
    <location>
        <begin position="211"/>
        <end position="220"/>
    </location>
</feature>
<feature type="helix" evidence="13">
    <location>
        <begin position="222"/>
        <end position="226"/>
    </location>
</feature>
<feature type="turn" evidence="13">
    <location>
        <begin position="227"/>
        <end position="230"/>
    </location>
</feature>
<feature type="helix" evidence="13">
    <location>
        <begin position="231"/>
        <end position="236"/>
    </location>
</feature>
<feature type="strand" evidence="13">
    <location>
        <begin position="253"/>
        <end position="257"/>
    </location>
</feature>
<feature type="strand" evidence="13">
    <location>
        <begin position="259"/>
        <end position="262"/>
    </location>
</feature>
<feature type="strand" evidence="13">
    <location>
        <begin position="264"/>
        <end position="270"/>
    </location>
</feature>
<feature type="helix" evidence="13">
    <location>
        <begin position="273"/>
        <end position="288"/>
    </location>
</feature>
<feature type="helix" evidence="13">
    <location>
        <begin position="291"/>
        <end position="299"/>
    </location>
</feature>
<feature type="helix" evidence="13">
    <location>
        <begin position="303"/>
        <end position="307"/>
    </location>
</feature>
<feature type="strand" evidence="13">
    <location>
        <begin position="308"/>
        <end position="316"/>
    </location>
</feature>
<feature type="turn" evidence="13">
    <location>
        <begin position="317"/>
        <end position="319"/>
    </location>
</feature>
<feature type="strand" evidence="13">
    <location>
        <begin position="320"/>
        <end position="322"/>
    </location>
</feature>
<feature type="turn" evidence="13">
    <location>
        <begin position="324"/>
        <end position="326"/>
    </location>
</feature>
<feature type="strand" evidence="13">
    <location>
        <begin position="328"/>
        <end position="334"/>
    </location>
</feature>
<feature type="strand" evidence="13">
    <location>
        <begin position="340"/>
        <end position="349"/>
    </location>
</feature>
<feature type="helix" evidence="13">
    <location>
        <begin position="354"/>
        <end position="367"/>
    </location>
</feature>
<feature type="helix" evidence="13">
    <location>
        <begin position="375"/>
        <end position="388"/>
    </location>
</feature>
<feature type="helix" evidence="13">
    <location>
        <begin position="393"/>
        <end position="395"/>
    </location>
</feature>
<feature type="turn" evidence="13">
    <location>
        <begin position="403"/>
        <end position="406"/>
    </location>
</feature>
<feature type="strand" evidence="14">
    <location>
        <begin position="408"/>
        <end position="410"/>
    </location>
</feature>
<feature type="strand" evidence="13">
    <location>
        <begin position="413"/>
        <end position="415"/>
    </location>
</feature>
<feature type="strand" evidence="13">
    <location>
        <begin position="417"/>
        <end position="423"/>
    </location>
</feature>
<feature type="helix" evidence="13">
    <location>
        <begin position="426"/>
        <end position="439"/>
    </location>
</feature>
<feature type="helix" evidence="13">
    <location>
        <begin position="444"/>
        <end position="448"/>
    </location>
</feature>
<organism>
    <name type="scientific">Rhodococcus jostii (strain RHA1)</name>
    <dbReference type="NCBI Taxonomy" id="101510"/>
    <lineage>
        <taxon>Bacteria</taxon>
        <taxon>Bacillati</taxon>
        <taxon>Actinomycetota</taxon>
        <taxon>Actinomycetes</taxon>
        <taxon>Mycobacteriales</taxon>
        <taxon>Nocardiaceae</taxon>
        <taxon>Rhodococcus</taxon>
    </lineage>
</organism>
<geneLocation type="plasmid" evidence="10">
    <name>pRHL1</name>
</geneLocation>
<proteinExistence type="evidence at protein level"/>
<evidence type="ECO:0000255" key="1">
    <source>
        <dbReference type="PROSITE-ProRule" id="PRU00628"/>
    </source>
</evidence>
<evidence type="ECO:0000269" key="2">
    <source>
    </source>
</evidence>
<evidence type="ECO:0000269" key="3">
    <source>
    </source>
</evidence>
<evidence type="ECO:0000269" key="4">
    <source>
    </source>
</evidence>
<evidence type="ECO:0000269" key="5">
    <source>
    </source>
</evidence>
<evidence type="ECO:0000303" key="6">
    <source>
    </source>
</evidence>
<evidence type="ECO:0000303" key="7">
    <source>
    </source>
</evidence>
<evidence type="ECO:0000303" key="8">
    <source>
    </source>
</evidence>
<evidence type="ECO:0000305" key="9"/>
<evidence type="ECO:0000312" key="10">
    <source>
        <dbReference type="EMBL" id="ABG99107.1"/>
    </source>
</evidence>
<evidence type="ECO:0000312" key="11">
    <source>
        <dbReference type="PDB" id="1ULI"/>
    </source>
</evidence>
<evidence type="ECO:0000312" key="12">
    <source>
        <dbReference type="PDB" id="1ULJ"/>
    </source>
</evidence>
<evidence type="ECO:0007829" key="13">
    <source>
        <dbReference type="PDB" id="1ULI"/>
    </source>
</evidence>
<evidence type="ECO:0007829" key="14">
    <source>
        <dbReference type="PDB" id="1ULJ"/>
    </source>
</evidence>
<accession>Q53122</accession>
<keyword id="KW-0001">2Fe-2S</keyword>
<keyword id="KW-0002">3D-structure</keyword>
<keyword id="KW-0058">Aromatic hydrocarbons catabolism</keyword>
<keyword id="KW-0223">Dioxygenase</keyword>
<keyword id="KW-0408">Iron</keyword>
<keyword id="KW-0411">Iron-sulfur</keyword>
<keyword id="KW-0479">Metal-binding</keyword>
<keyword id="KW-0520">NAD</keyword>
<keyword id="KW-0560">Oxidoreductase</keyword>
<keyword id="KW-0614">Plasmid</keyword>
<protein>
    <recommendedName>
        <fullName evidence="9">Biphenyl 2,3-dioxygenase subunit alpha</fullName>
        <ecNumber evidence="4">1.14.12.18</ecNumber>
    </recommendedName>
    <alternativeName>
        <fullName evidence="9">Biphenyl dioxygenase system, oxygenase component subunit alpha</fullName>
        <shortName evidence="9">BDO, oxygenase component subunit alpha</shortName>
    </alternativeName>
    <alternativeName>
        <fullName evidence="6">Rieske dioxygenase</fullName>
    </alternativeName>
    <alternativeName>
        <fullName evidence="6">Terminal oxygenase component of biphenyl dioxygenase, large subunit</fullName>
    </alternativeName>
</protein>